<reference key="1">
    <citation type="journal article" date="2009" name="PLoS ONE">
        <title>Salmonella paratyphi C: genetic divergence from Salmonella choleraesuis and pathogenic convergence with Salmonella typhi.</title>
        <authorList>
            <person name="Liu W.-Q."/>
            <person name="Feng Y."/>
            <person name="Wang Y."/>
            <person name="Zou Q.-H."/>
            <person name="Chen F."/>
            <person name="Guo J.-T."/>
            <person name="Peng Y.-H."/>
            <person name="Jin Y."/>
            <person name="Li Y.-G."/>
            <person name="Hu S.-N."/>
            <person name="Johnston R.N."/>
            <person name="Liu G.-R."/>
            <person name="Liu S.-L."/>
        </authorList>
    </citation>
    <scope>NUCLEOTIDE SEQUENCE [LARGE SCALE GENOMIC DNA]</scope>
    <source>
        <strain>RKS4594</strain>
    </source>
</reference>
<feature type="chain" id="PRO_1000147041" description="Chaperonin GroEL">
    <location>
        <begin position="1"/>
        <end position="548"/>
    </location>
</feature>
<feature type="binding site" evidence="1">
    <location>
        <begin position="30"/>
        <end position="33"/>
    </location>
    <ligand>
        <name>ATP</name>
        <dbReference type="ChEBI" id="CHEBI:30616"/>
    </ligand>
</feature>
<feature type="binding site" evidence="1">
    <location>
        <position position="51"/>
    </location>
    <ligand>
        <name>ATP</name>
        <dbReference type="ChEBI" id="CHEBI:30616"/>
    </ligand>
</feature>
<feature type="binding site" evidence="1">
    <location>
        <begin position="87"/>
        <end position="91"/>
    </location>
    <ligand>
        <name>ATP</name>
        <dbReference type="ChEBI" id="CHEBI:30616"/>
    </ligand>
</feature>
<feature type="binding site" evidence="1">
    <location>
        <position position="415"/>
    </location>
    <ligand>
        <name>ATP</name>
        <dbReference type="ChEBI" id="CHEBI:30616"/>
    </ligand>
</feature>
<feature type="binding site" evidence="1">
    <location>
        <begin position="479"/>
        <end position="481"/>
    </location>
    <ligand>
        <name>ATP</name>
        <dbReference type="ChEBI" id="CHEBI:30616"/>
    </ligand>
</feature>
<feature type="binding site" evidence="1">
    <location>
        <position position="495"/>
    </location>
    <ligand>
        <name>ATP</name>
        <dbReference type="ChEBI" id="CHEBI:30616"/>
    </ligand>
</feature>
<keyword id="KW-0067">ATP-binding</keyword>
<keyword id="KW-0143">Chaperone</keyword>
<keyword id="KW-0963">Cytoplasm</keyword>
<keyword id="KW-0413">Isomerase</keyword>
<keyword id="KW-0547">Nucleotide-binding</keyword>
<accession>C0Q6A2</accession>
<sequence length="548" mass="57286">MAAKDVKFGNDARVKMLRGVNVLADAVKVTLGPKGRNVVLDKSFGAPTITKDGVSVAREIELEDKFENMGAQMVKEVASKANDAAGDGTTTATVLAQSIITEGLKAVAAGMNPMDLKRGIDKAVAAAVEELKALSVPCSDSKAIAQVGTISANSDETVGKLIAEAMDKVGKEGVITVEDGTGLQDELDVVEGMQFDRGYLSPYFINKPETGAVELESPFILLADKKISNIREMLPVLEAVAKAGKPLLIIAEDVEGEALATLVVNTMRGIVKVAAVKAPGFGDRRKAMLQDIATLTGGTVISEEIGMELEKATLEDLGQAKRVVINKDTTTIIDGVGEEAAIQGRVAQIRQQIEEATSDYDREKLQERVAKLAGGVAVIKVGAATEVEMKEKKARVEDALHATRAAVEEGVVAGGGVALIRVASKIADLKGQNEDQNVGIKVALRAMEAPLRQIVLNCGEEPSVVANTVKGGDGNYGYNAATEEYGNMIDMGILDPTKVTRSALQYAASVAGLMITTECMVTDLPKSDAPDLGAAGGMGGMGGMGGMM</sequence>
<comment type="function">
    <text evidence="1">Together with its co-chaperonin GroES, plays an essential role in assisting protein folding. The GroEL-GroES system forms a nano-cage that allows encapsulation of the non-native substrate proteins and provides a physical environment optimized to promote and accelerate protein folding.</text>
</comment>
<comment type="catalytic activity">
    <reaction evidence="1">
        <text>ATP + H2O + a folded polypeptide = ADP + phosphate + an unfolded polypeptide.</text>
        <dbReference type="EC" id="5.6.1.7"/>
    </reaction>
</comment>
<comment type="subunit">
    <text evidence="1">Forms a cylinder of 14 subunits composed of two heptameric rings stacked back-to-back. Interacts with the co-chaperonin GroES.</text>
</comment>
<comment type="subcellular location">
    <subcellularLocation>
        <location evidence="1">Cytoplasm</location>
    </subcellularLocation>
</comment>
<comment type="similarity">
    <text evidence="1">Belongs to the chaperonin (HSP60) family.</text>
</comment>
<organism>
    <name type="scientific">Salmonella paratyphi C (strain RKS4594)</name>
    <dbReference type="NCBI Taxonomy" id="476213"/>
    <lineage>
        <taxon>Bacteria</taxon>
        <taxon>Pseudomonadati</taxon>
        <taxon>Pseudomonadota</taxon>
        <taxon>Gammaproteobacteria</taxon>
        <taxon>Enterobacterales</taxon>
        <taxon>Enterobacteriaceae</taxon>
        <taxon>Salmonella</taxon>
    </lineage>
</organism>
<name>CH60_SALPC</name>
<proteinExistence type="inferred from homology"/>
<evidence type="ECO:0000255" key="1">
    <source>
        <dbReference type="HAMAP-Rule" id="MF_00600"/>
    </source>
</evidence>
<protein>
    <recommendedName>
        <fullName evidence="1">Chaperonin GroEL</fullName>
        <ecNumber evidence="1">5.6.1.7</ecNumber>
    </recommendedName>
    <alternativeName>
        <fullName evidence="1">60 kDa chaperonin</fullName>
    </alternativeName>
    <alternativeName>
        <fullName evidence="1">Chaperonin-60</fullName>
        <shortName evidence="1">Cpn60</shortName>
    </alternativeName>
</protein>
<gene>
    <name evidence="1" type="primary">groEL</name>
    <name evidence="1" type="synonym">groL</name>
    <name type="ordered locus">SPC_4480</name>
</gene>
<dbReference type="EC" id="5.6.1.7" evidence="1"/>
<dbReference type="EMBL" id="CP000857">
    <property type="protein sequence ID" value="ACN48532.1"/>
    <property type="molecule type" value="Genomic_DNA"/>
</dbReference>
<dbReference type="RefSeq" id="WP_000729126.1">
    <property type="nucleotide sequence ID" value="NC_012125.1"/>
</dbReference>
<dbReference type="SMR" id="C0Q6A2"/>
<dbReference type="KEGG" id="sei:SPC_4480"/>
<dbReference type="HOGENOM" id="CLU_016503_3_0_6"/>
<dbReference type="Proteomes" id="UP000001599">
    <property type="component" value="Chromosome"/>
</dbReference>
<dbReference type="GO" id="GO:0005737">
    <property type="term" value="C:cytoplasm"/>
    <property type="evidence" value="ECO:0007669"/>
    <property type="project" value="UniProtKB-SubCell"/>
</dbReference>
<dbReference type="GO" id="GO:0005524">
    <property type="term" value="F:ATP binding"/>
    <property type="evidence" value="ECO:0007669"/>
    <property type="project" value="UniProtKB-UniRule"/>
</dbReference>
<dbReference type="GO" id="GO:0140662">
    <property type="term" value="F:ATP-dependent protein folding chaperone"/>
    <property type="evidence" value="ECO:0007669"/>
    <property type="project" value="InterPro"/>
</dbReference>
<dbReference type="GO" id="GO:0016853">
    <property type="term" value="F:isomerase activity"/>
    <property type="evidence" value="ECO:0007669"/>
    <property type="project" value="UniProtKB-KW"/>
</dbReference>
<dbReference type="GO" id="GO:0051082">
    <property type="term" value="F:unfolded protein binding"/>
    <property type="evidence" value="ECO:0007669"/>
    <property type="project" value="UniProtKB-UniRule"/>
</dbReference>
<dbReference type="GO" id="GO:0042026">
    <property type="term" value="P:protein refolding"/>
    <property type="evidence" value="ECO:0007669"/>
    <property type="project" value="UniProtKB-UniRule"/>
</dbReference>
<dbReference type="CDD" id="cd03344">
    <property type="entry name" value="GroEL"/>
    <property type="match status" value="1"/>
</dbReference>
<dbReference type="FunFam" id="1.10.560.10:FF:000001">
    <property type="entry name" value="60 kDa chaperonin"/>
    <property type="match status" value="1"/>
</dbReference>
<dbReference type="FunFam" id="3.50.7.10:FF:000001">
    <property type="entry name" value="60 kDa chaperonin"/>
    <property type="match status" value="1"/>
</dbReference>
<dbReference type="Gene3D" id="3.50.7.10">
    <property type="entry name" value="GroEL"/>
    <property type="match status" value="1"/>
</dbReference>
<dbReference type="Gene3D" id="1.10.560.10">
    <property type="entry name" value="GroEL-like equatorial domain"/>
    <property type="match status" value="1"/>
</dbReference>
<dbReference type="Gene3D" id="3.30.260.10">
    <property type="entry name" value="TCP-1-like chaperonin intermediate domain"/>
    <property type="match status" value="1"/>
</dbReference>
<dbReference type="HAMAP" id="MF_00600">
    <property type="entry name" value="CH60"/>
    <property type="match status" value="1"/>
</dbReference>
<dbReference type="InterPro" id="IPR018370">
    <property type="entry name" value="Chaperonin_Cpn60_CS"/>
</dbReference>
<dbReference type="InterPro" id="IPR001844">
    <property type="entry name" value="Cpn60/GroEL"/>
</dbReference>
<dbReference type="InterPro" id="IPR002423">
    <property type="entry name" value="Cpn60/GroEL/TCP-1"/>
</dbReference>
<dbReference type="InterPro" id="IPR027409">
    <property type="entry name" value="GroEL-like_apical_dom_sf"/>
</dbReference>
<dbReference type="InterPro" id="IPR027413">
    <property type="entry name" value="GROEL-like_equatorial_sf"/>
</dbReference>
<dbReference type="InterPro" id="IPR027410">
    <property type="entry name" value="TCP-1-like_intermed_sf"/>
</dbReference>
<dbReference type="NCBIfam" id="TIGR02348">
    <property type="entry name" value="GroEL"/>
    <property type="match status" value="1"/>
</dbReference>
<dbReference type="NCBIfam" id="NF000592">
    <property type="entry name" value="PRK00013.1"/>
    <property type="match status" value="1"/>
</dbReference>
<dbReference type="NCBIfam" id="NF009487">
    <property type="entry name" value="PRK12849.1"/>
    <property type="match status" value="1"/>
</dbReference>
<dbReference type="NCBIfam" id="NF009488">
    <property type="entry name" value="PRK12850.1"/>
    <property type="match status" value="1"/>
</dbReference>
<dbReference type="NCBIfam" id="NF009489">
    <property type="entry name" value="PRK12851.1"/>
    <property type="match status" value="1"/>
</dbReference>
<dbReference type="PANTHER" id="PTHR45633">
    <property type="entry name" value="60 KDA HEAT SHOCK PROTEIN, MITOCHONDRIAL"/>
    <property type="match status" value="1"/>
</dbReference>
<dbReference type="Pfam" id="PF00118">
    <property type="entry name" value="Cpn60_TCP1"/>
    <property type="match status" value="1"/>
</dbReference>
<dbReference type="PRINTS" id="PR00298">
    <property type="entry name" value="CHAPERONIN60"/>
</dbReference>
<dbReference type="SUPFAM" id="SSF52029">
    <property type="entry name" value="GroEL apical domain-like"/>
    <property type="match status" value="1"/>
</dbReference>
<dbReference type="SUPFAM" id="SSF48592">
    <property type="entry name" value="GroEL equatorial domain-like"/>
    <property type="match status" value="1"/>
</dbReference>
<dbReference type="SUPFAM" id="SSF54849">
    <property type="entry name" value="GroEL-intermediate domain like"/>
    <property type="match status" value="1"/>
</dbReference>
<dbReference type="PROSITE" id="PS00296">
    <property type="entry name" value="CHAPERONINS_CPN60"/>
    <property type="match status" value="1"/>
</dbReference>